<accession>Q9XU84</accession>
<evidence type="ECO:0000250" key="1"/>
<evidence type="ECO:0000255" key="2"/>
<evidence type="ECO:0000269" key="3">
    <source>
    </source>
</evidence>
<evidence type="ECO:0000269" key="4">
    <source>
    </source>
</evidence>
<evidence type="ECO:0000269" key="5">
    <source>
    </source>
</evidence>
<evidence type="ECO:0000305" key="6"/>
<evidence type="ECO:0000305" key="7">
    <source>
    </source>
</evidence>
<proteinExistence type="evidence at protein level"/>
<keyword id="KW-0106">Calcium</keyword>
<keyword id="KW-0325">Glycoprotein</keyword>
<keyword id="KW-0378">Hydrolase</keyword>
<keyword id="KW-0460">Magnesium</keyword>
<keyword id="KW-0472">Membrane</keyword>
<keyword id="KW-0479">Metal-binding</keyword>
<keyword id="KW-1185">Reference proteome</keyword>
<keyword id="KW-0735">Signal-anchor</keyword>
<keyword id="KW-0346">Stress response</keyword>
<keyword id="KW-0812">Transmembrane</keyword>
<keyword id="KW-1133">Transmembrane helix</keyword>
<reference key="1">
    <citation type="journal article" date="1998" name="Science">
        <title>Genome sequence of the nematode C. elegans: a platform for investigating biology.</title>
        <authorList>
            <consortium name="The C. elegans sequencing consortium"/>
        </authorList>
    </citation>
    <scope>NUCLEOTIDE SEQUENCE [LARGE SCALE GENOMIC DNA]</scope>
    <source>
        <strain>Bristol N2</strain>
    </source>
</reference>
<reference key="2">
    <citation type="journal article" date="2003" name="Nat. Biotechnol.">
        <title>Lectin affinity capture, isotope-coded tagging and mass spectrometry to identify N-linked glycoproteins.</title>
        <authorList>
            <person name="Kaji H."/>
            <person name="Saito H."/>
            <person name="Yamauchi Y."/>
            <person name="Shinkawa T."/>
            <person name="Taoka M."/>
            <person name="Hirabayashi J."/>
            <person name="Kasai K."/>
            <person name="Takahashi N."/>
            <person name="Isobe T."/>
        </authorList>
    </citation>
    <scope>GLYCOSYLATION [LARGE SCALE ANALYSIS] AT ASN-300</scope>
    <scope>IDENTIFICATION BY MASS SPECTROMETRY</scope>
    <source>
        <strain>Bristol N2</strain>
    </source>
</reference>
<reference key="3">
    <citation type="journal article" date="2004" name="J. Biol. Chem.">
        <title>ire-1-dependent transcriptional up-regulation of a lumenal uridine diphosphatase from Caenorhabditis elegans.</title>
        <authorList>
            <person name="Uccelletti D."/>
            <person name="O'Callaghan C."/>
            <person name="Berninsone P."/>
            <person name="Zemtseva I."/>
            <person name="Abeijon C."/>
            <person name="Hirschberg C.B."/>
        </authorList>
    </citation>
    <scope>FUNCTION</scope>
    <scope>SUBCELLULAR LOCATION</scope>
    <scope>COFACTOR</scope>
    <scope>BIOPHYSICOCHEMICAL PROPERTIES</scope>
    <scope>INDUCTION BY STRESS</scope>
</reference>
<reference key="4">
    <citation type="journal article" date="2007" name="Mol. Cell. Proteomics">
        <title>Proteomics reveals N-linked glycoprotein diversity in Caenorhabditis elegans and suggests an atypical translocation mechanism for integral membrane proteins.</title>
        <authorList>
            <person name="Kaji H."/>
            <person name="Kamiie J."/>
            <person name="Kawakami H."/>
            <person name="Kido K."/>
            <person name="Yamauchi Y."/>
            <person name="Shinkawa T."/>
            <person name="Taoka M."/>
            <person name="Takahashi N."/>
            <person name="Isobe T."/>
        </authorList>
    </citation>
    <scope>GLYCOSYLATION [LARGE SCALE ANALYSIS] AT ASN-300</scope>
    <scope>IDENTIFICATION BY MASS SPECTROMETRY</scope>
    <source>
        <strain>Bristol N2</strain>
    </source>
</reference>
<feature type="chain" id="PRO_0000248568" description="Nucleoside-diphosphatase uda-1">
    <location>
        <begin position="1"/>
        <end position="479"/>
    </location>
</feature>
<feature type="topological domain" description="Cytoplasmic" evidence="2">
    <location>
        <begin position="1"/>
        <end position="7"/>
    </location>
</feature>
<feature type="transmembrane region" description="Helical; Signal-anchor for type II membrane protein" evidence="2">
    <location>
        <begin position="8"/>
        <end position="24"/>
    </location>
</feature>
<feature type="topological domain" description="Lumenal" evidence="2">
    <location>
        <begin position="25"/>
        <end position="479"/>
    </location>
</feature>
<feature type="active site" description="Proton acceptor" evidence="1">
    <location>
        <position position="171"/>
    </location>
</feature>
<feature type="glycosylation site" description="N-linked (GlcNAc...) asparagine" evidence="3 5">
    <location>
        <position position="300"/>
    </location>
</feature>
<feature type="glycosylation site" description="N-linked (GlcNAc...) asparagine" evidence="2">
    <location>
        <position position="452"/>
    </location>
</feature>
<name>UDA1_CAEEL</name>
<organism>
    <name type="scientific">Caenorhabditis elegans</name>
    <dbReference type="NCBI Taxonomy" id="6239"/>
    <lineage>
        <taxon>Eukaryota</taxon>
        <taxon>Metazoa</taxon>
        <taxon>Ecdysozoa</taxon>
        <taxon>Nematoda</taxon>
        <taxon>Chromadorea</taxon>
        <taxon>Rhabditida</taxon>
        <taxon>Rhabditina</taxon>
        <taxon>Rhabditomorpha</taxon>
        <taxon>Rhabditoidea</taxon>
        <taxon>Rhabditidae</taxon>
        <taxon>Peloderinae</taxon>
        <taxon>Caenorhabditis</taxon>
    </lineage>
</organism>
<comment type="function">
    <text evidence="4">Hydrolyzes UDP and GDP but not any other nucleoside di-, mono- or triphosphates. May promote reglycosylation reactions involved in glycoproteins folding and quality control in the endoplasmic reticulum.</text>
</comment>
<comment type="catalytic activity">
    <reaction>
        <text>a ribonucleoside 5'-diphosphate + H2O = a ribonucleoside 5'-phosphate + phosphate + H(+)</text>
        <dbReference type="Rhea" id="RHEA:36799"/>
        <dbReference type="ChEBI" id="CHEBI:15377"/>
        <dbReference type="ChEBI" id="CHEBI:15378"/>
        <dbReference type="ChEBI" id="CHEBI:43474"/>
        <dbReference type="ChEBI" id="CHEBI:57930"/>
        <dbReference type="ChEBI" id="CHEBI:58043"/>
        <dbReference type="EC" id="3.6.1.6"/>
    </reaction>
</comment>
<comment type="cofactor">
    <cofactor evidence="4">
        <name>Ca(2+)</name>
        <dbReference type="ChEBI" id="CHEBI:29108"/>
    </cofactor>
</comment>
<comment type="cofactor">
    <cofactor evidence="4">
        <name>Mg(2+)</name>
        <dbReference type="ChEBI" id="CHEBI:18420"/>
    </cofactor>
</comment>
<comment type="cofactor">
    <cofactor evidence="4">
        <name>Mn(2+)</name>
        <dbReference type="ChEBI" id="CHEBI:29035"/>
    </cofactor>
</comment>
<comment type="biophysicochemical properties">
    <kinetics>
        <KM evidence="4">180 uM for UDP</KM>
        <text>In the presence of 10 mM calcium.</text>
    </kinetics>
    <phDependence>
        <text evidence="4">Optimum pH is 8.0 for UDP and 7.5 for GDP.</text>
    </phDependence>
</comment>
<comment type="subcellular location">
    <subcellularLocation>
        <location evidence="7">Endomembrane system</location>
        <topology evidence="7">Single-pass type II membrane protein</topology>
    </subcellularLocation>
</comment>
<comment type="induction">
    <text evidence="4">By stress such as high temperature or ethanol.</text>
</comment>
<comment type="similarity">
    <text evidence="6">Belongs to the GDA1/CD39 NTPase family.</text>
</comment>
<sequence>MLFPAFSILLISFFSLLSVVTTKTQYWCHGDGVLNNQHTCRFFTIVIDAGSTGTRLHLYKFIHDPAIASHGMPFKVEKEIFQEVKPGLSSFAKSPSSAADSLEPLLQRARKEVPHFMWEKTPITLKATAGLRLLPGDMADDILESVEERIFNSGFFAAFPDAVNVMPGSDEGVYSWFTLNILLETLFTDEPTVGHKPAAHRSVAAFDLGGGSTQLTYWPNNEAVFSEHVGYERDIDFFGHHIRLFTHSFLGNGLIAARLNILQLETDNEIESTHQLITSCMPEGYQLTEWEYALKFWNINGSSSHSFESCYGTTKNFVESSEIMHLRELKGSPVYLFSYFFDRALNSGLVKGNEGGKIELRQFKEAAEIACRREKTEIDDGSHWMPWQCLDLTYIYSLLRDGYQFEDNQPLVLAKKIKGMEVSWGQGLAFATANEFQLTEGAIKTALSSEPNSTVVDQIFDLVYSGTNQVLSYFNIISV</sequence>
<gene>
    <name type="primary">uda-1</name>
    <name type="ORF">K08H10.4</name>
</gene>
<protein>
    <recommendedName>
        <fullName>Nucleoside-diphosphatase uda-1</fullName>
        <ecNumber>3.6.1.6</ecNumber>
    </recommendedName>
    <alternativeName>
        <fullName>Uridine-diphosphatase</fullName>
    </alternativeName>
</protein>
<dbReference type="EC" id="3.6.1.6"/>
<dbReference type="EMBL" id="Z83113">
    <property type="protein sequence ID" value="CAB05544.1"/>
    <property type="molecule type" value="Genomic_DNA"/>
</dbReference>
<dbReference type="PIR" id="T23508">
    <property type="entry name" value="T23508"/>
</dbReference>
<dbReference type="RefSeq" id="NP_505573.1">
    <property type="nucleotide sequence ID" value="NM_073172.4"/>
</dbReference>
<dbReference type="SMR" id="Q9XU84"/>
<dbReference type="BioGRID" id="44428">
    <property type="interactions" value="3"/>
</dbReference>
<dbReference type="FunCoup" id="Q9XU84">
    <property type="interactions" value="2780"/>
</dbReference>
<dbReference type="STRING" id="6239.K08H10.4.1"/>
<dbReference type="GlyCosmos" id="Q9XU84">
    <property type="glycosylation" value="2 sites, No reported glycans"/>
</dbReference>
<dbReference type="iPTMnet" id="Q9XU84"/>
<dbReference type="PaxDb" id="6239-K08H10.4"/>
<dbReference type="PeptideAtlas" id="Q9XU84"/>
<dbReference type="EnsemblMetazoa" id="K08H10.4.1">
    <property type="protein sequence ID" value="K08H10.4.1"/>
    <property type="gene ID" value="WBGene00010697"/>
</dbReference>
<dbReference type="GeneID" id="179395"/>
<dbReference type="KEGG" id="cel:CELE_K08H10.4"/>
<dbReference type="UCSC" id="K08H10.4.1">
    <property type="organism name" value="c. elegans"/>
</dbReference>
<dbReference type="AGR" id="WB:WBGene00010697"/>
<dbReference type="CTD" id="179395"/>
<dbReference type="WormBase" id="K08H10.4">
    <property type="protein sequence ID" value="CE18877"/>
    <property type="gene ID" value="WBGene00010697"/>
    <property type="gene designation" value="uda-1"/>
</dbReference>
<dbReference type="eggNOG" id="KOG1385">
    <property type="taxonomic scope" value="Eukaryota"/>
</dbReference>
<dbReference type="GeneTree" id="ENSGT01110000267162"/>
<dbReference type="HOGENOM" id="CLU_010246_0_2_1"/>
<dbReference type="InParanoid" id="Q9XU84"/>
<dbReference type="OMA" id="WTCRIKE"/>
<dbReference type="OrthoDB" id="6372431at2759"/>
<dbReference type="PhylomeDB" id="Q9XU84"/>
<dbReference type="Reactome" id="R-CEL-8850843">
    <property type="pathway name" value="Phosphate bond hydrolysis by NTPDase proteins"/>
</dbReference>
<dbReference type="PRO" id="PR:Q9XU84"/>
<dbReference type="Proteomes" id="UP000001940">
    <property type="component" value="Chromosome V"/>
</dbReference>
<dbReference type="Bgee" id="WBGene00010697">
    <property type="expression patterns" value="Expressed in adult organism and 4 other cell types or tissues"/>
</dbReference>
<dbReference type="GO" id="GO:0030659">
    <property type="term" value="C:cytoplasmic vesicle membrane"/>
    <property type="evidence" value="ECO:0000314"/>
    <property type="project" value="WormBase"/>
</dbReference>
<dbReference type="GO" id="GO:0012505">
    <property type="term" value="C:endomembrane system"/>
    <property type="evidence" value="ECO:0007669"/>
    <property type="project" value="UniProtKB-SubCell"/>
</dbReference>
<dbReference type="GO" id="GO:0004382">
    <property type="term" value="F:GDP phosphatase activity"/>
    <property type="evidence" value="ECO:0000314"/>
    <property type="project" value="WormBase"/>
</dbReference>
<dbReference type="GO" id="GO:0046872">
    <property type="term" value="F:metal ion binding"/>
    <property type="evidence" value="ECO:0007669"/>
    <property type="project" value="UniProtKB-KW"/>
</dbReference>
<dbReference type="GO" id="GO:0045134">
    <property type="term" value="F:UDP phosphatase activity"/>
    <property type="evidence" value="ECO:0000314"/>
    <property type="project" value="WormBase"/>
</dbReference>
<dbReference type="GO" id="GO:0046710">
    <property type="term" value="P:GDP metabolic process"/>
    <property type="evidence" value="ECO:0000314"/>
    <property type="project" value="WormBase"/>
</dbReference>
<dbReference type="GO" id="GO:0046048">
    <property type="term" value="P:UDP metabolic process"/>
    <property type="evidence" value="ECO:0000314"/>
    <property type="project" value="WormBase"/>
</dbReference>
<dbReference type="CDD" id="cd24046">
    <property type="entry name" value="ASKHA_NBD_NTPDase5-like"/>
    <property type="match status" value="1"/>
</dbReference>
<dbReference type="Gene3D" id="3.30.420.40">
    <property type="match status" value="1"/>
</dbReference>
<dbReference type="Gene3D" id="3.30.420.150">
    <property type="entry name" value="Exopolyphosphatase. Domain 2"/>
    <property type="match status" value="1"/>
</dbReference>
<dbReference type="InterPro" id="IPR000407">
    <property type="entry name" value="GDA1_CD39_NTPase"/>
</dbReference>
<dbReference type="PANTHER" id="PTHR11782">
    <property type="entry name" value="ADENOSINE/GUANOSINE DIPHOSPHATASE"/>
    <property type="match status" value="1"/>
</dbReference>
<dbReference type="PANTHER" id="PTHR11782:SF127">
    <property type="entry name" value="NTPASE, ISOFORM F"/>
    <property type="match status" value="1"/>
</dbReference>
<dbReference type="Pfam" id="PF01150">
    <property type="entry name" value="GDA1_CD39"/>
    <property type="match status" value="1"/>
</dbReference>